<keyword id="KW-0119">Carbohydrate metabolism</keyword>
<keyword id="KW-1015">Disulfide bond</keyword>
<keyword id="KW-0326">Glycosidase</keyword>
<keyword id="KW-0378">Hydrolase</keyword>
<keyword id="KW-1185">Reference proteome</keyword>
<keyword id="KW-0732">Signal</keyword>
<proteinExistence type="inferred from homology"/>
<dbReference type="EC" id="3.2.1.22"/>
<dbReference type="EMBL" id="AAFI02000006">
    <property type="protein sequence ID" value="EAL71875.1"/>
    <property type="molecule type" value="Genomic_DNA"/>
</dbReference>
<dbReference type="RefSeq" id="XP_645802.1">
    <property type="nucleotide sequence ID" value="XM_640710.1"/>
</dbReference>
<dbReference type="SMR" id="Q55B10"/>
<dbReference type="FunCoup" id="Q55B10">
    <property type="interactions" value="50"/>
</dbReference>
<dbReference type="STRING" id="44689.Q55B10"/>
<dbReference type="PaxDb" id="44689-DDB0233870"/>
<dbReference type="EnsemblProtists" id="EAL71875">
    <property type="protein sequence ID" value="EAL71875"/>
    <property type="gene ID" value="DDB_G0271490"/>
</dbReference>
<dbReference type="GeneID" id="8617994"/>
<dbReference type="KEGG" id="ddi:DDB_G0271490"/>
<dbReference type="dictyBase" id="DDB_G0271490">
    <property type="gene designation" value="melA"/>
</dbReference>
<dbReference type="VEuPathDB" id="AmoebaDB:DDB_G0271490"/>
<dbReference type="eggNOG" id="KOG2366">
    <property type="taxonomic scope" value="Eukaryota"/>
</dbReference>
<dbReference type="HOGENOM" id="CLU_013093_2_2_1"/>
<dbReference type="InParanoid" id="Q55B10"/>
<dbReference type="OMA" id="MTPTMGW"/>
<dbReference type="PhylomeDB" id="Q55B10"/>
<dbReference type="Reactome" id="R-DDI-6798695">
    <property type="pathway name" value="Neutrophil degranulation"/>
</dbReference>
<dbReference type="Reactome" id="R-DDI-9840310">
    <property type="pathway name" value="Glycosphingolipid catabolism"/>
</dbReference>
<dbReference type="PRO" id="PR:Q55B10"/>
<dbReference type="Proteomes" id="UP000002195">
    <property type="component" value="Chromosome 2"/>
</dbReference>
<dbReference type="GO" id="GO:0004557">
    <property type="term" value="F:alpha-galactosidase activity"/>
    <property type="evidence" value="ECO:0007669"/>
    <property type="project" value="UniProtKB-EC"/>
</dbReference>
<dbReference type="GO" id="GO:0005975">
    <property type="term" value="P:carbohydrate metabolic process"/>
    <property type="evidence" value="ECO:0007669"/>
    <property type="project" value="InterPro"/>
</dbReference>
<dbReference type="CDD" id="cd14792">
    <property type="entry name" value="GH27"/>
    <property type="match status" value="1"/>
</dbReference>
<dbReference type="FunFam" id="2.60.40.1180:FF:000008">
    <property type="entry name" value="Alpha-galactosidase"/>
    <property type="match status" value="1"/>
</dbReference>
<dbReference type="FunFam" id="3.20.20.70:FF:000202">
    <property type="entry name" value="Alpha-galactosidase"/>
    <property type="match status" value="1"/>
</dbReference>
<dbReference type="Gene3D" id="3.20.20.70">
    <property type="entry name" value="Aldolase class I"/>
    <property type="match status" value="1"/>
</dbReference>
<dbReference type="Gene3D" id="2.60.40.1180">
    <property type="entry name" value="Golgi alpha-mannosidase II"/>
    <property type="match status" value="1"/>
</dbReference>
<dbReference type="InterPro" id="IPR013785">
    <property type="entry name" value="Aldolase_TIM"/>
</dbReference>
<dbReference type="InterPro" id="IPR002241">
    <property type="entry name" value="Glyco_hydro_27"/>
</dbReference>
<dbReference type="InterPro" id="IPR013780">
    <property type="entry name" value="Glyco_hydro_b"/>
</dbReference>
<dbReference type="InterPro" id="IPR017853">
    <property type="entry name" value="Glycoside_hydrolase_SF"/>
</dbReference>
<dbReference type="InterPro" id="IPR041233">
    <property type="entry name" value="Melibiase_C"/>
</dbReference>
<dbReference type="PANTHER" id="PTHR11452:SF75">
    <property type="entry name" value="ALPHA-GALACTOSIDASE MEL1"/>
    <property type="match status" value="1"/>
</dbReference>
<dbReference type="PANTHER" id="PTHR11452">
    <property type="entry name" value="ALPHA-GALACTOSIDASE/ALPHA-N-ACETYLGALACTOSAMINIDASE"/>
    <property type="match status" value="1"/>
</dbReference>
<dbReference type="Pfam" id="PF16499">
    <property type="entry name" value="Melibiase_2"/>
    <property type="match status" value="1"/>
</dbReference>
<dbReference type="Pfam" id="PF17801">
    <property type="entry name" value="Melibiase_C"/>
    <property type="match status" value="1"/>
</dbReference>
<dbReference type="PRINTS" id="PR00740">
    <property type="entry name" value="GLHYDRLASE27"/>
</dbReference>
<dbReference type="SUPFAM" id="SSF51445">
    <property type="entry name" value="(Trans)glycosidases"/>
    <property type="match status" value="1"/>
</dbReference>
<dbReference type="SUPFAM" id="SSF51011">
    <property type="entry name" value="Glycosyl hydrolase domain"/>
    <property type="match status" value="1"/>
</dbReference>
<organism>
    <name type="scientific">Dictyostelium discoideum</name>
    <name type="common">Social amoeba</name>
    <dbReference type="NCBI Taxonomy" id="44689"/>
    <lineage>
        <taxon>Eukaryota</taxon>
        <taxon>Amoebozoa</taxon>
        <taxon>Evosea</taxon>
        <taxon>Eumycetozoa</taxon>
        <taxon>Dictyostelia</taxon>
        <taxon>Dictyosteliales</taxon>
        <taxon>Dictyosteliaceae</taxon>
        <taxon>Dictyostelium</taxon>
    </lineage>
</organism>
<protein>
    <recommendedName>
        <fullName>Probable alpha-galactosidase</fullName>
        <ecNumber>3.2.1.22</ecNumber>
    </recommendedName>
    <alternativeName>
        <fullName>Alpha-D-galactoside galactohydrolase</fullName>
    </alternativeName>
    <alternativeName>
        <fullName>Melibiase</fullName>
    </alternativeName>
</protein>
<feature type="signal peptide" evidence="2">
    <location>
        <begin position="1"/>
        <end position="19"/>
    </location>
</feature>
<feature type="chain" id="PRO_0000327851" description="Probable alpha-galactosidase">
    <location>
        <begin position="20"/>
        <end position="385"/>
    </location>
</feature>
<feature type="active site" description="Nucleophile" evidence="1">
    <location>
        <position position="147"/>
    </location>
</feature>
<feature type="active site" description="Proton donor" evidence="1">
    <location>
        <position position="202"/>
    </location>
</feature>
<feature type="binding site" evidence="1">
    <location>
        <begin position="180"/>
        <end position="184"/>
    </location>
    <ligand>
        <name>substrate</name>
    </ligand>
</feature>
<feature type="disulfide bond" evidence="1">
    <location>
        <begin position="40"/>
        <end position="72"/>
    </location>
</feature>
<feature type="disulfide bond" evidence="1">
    <location>
        <begin position="119"/>
        <end position="149"/>
    </location>
</feature>
<gene>
    <name type="primary">melA</name>
    <name type="ORF">DDB_G0271490</name>
</gene>
<sequence>MMKIAATLLATIALATVNALDNGLALTPQMGWSSWNFYACNINESVIMNTAKAMVSNGMADAGYTYVNIDDCWAGGRYPNGTVYADPTNFPNGIKYVADYIHSLGLKIGIYTDAGTETCQKRVGSYGYEANDAQTYAEWGIDYVKEDWCYATLENPQQRYQIMSQALNATGRPMFFSLCDWGYENPWTFGMSVGNSWRTTPDIKDNWDSMLSNLMAQAPITSFSGIGGFNDPDMMMVGNGGMSNTEYVSHFSLWSLLNAPLIAGCDLIDIDQETLSILTASEVIAINQDPLGVQGSLVKSYNGGLQQIWAKPLSNGARAVVLFNTDTNPATIELLWGNIWMEPSQQLSIRNLWTQTNLGTFTESYESDSLIPPHGCIMLTLTPTN</sequence>
<comment type="catalytic activity">
    <reaction>
        <text>Hydrolysis of terminal, non-reducing alpha-D-galactose residues in alpha-D-galactosides, including galactose oligosaccharides, galactomannans and galactolipids.</text>
        <dbReference type="EC" id="3.2.1.22"/>
    </reaction>
</comment>
<comment type="similarity">
    <text evidence="3">Belongs to the glycosyl hydrolase 27 family.</text>
</comment>
<accession>Q55B10</accession>
<name>AGAL_DICDI</name>
<evidence type="ECO:0000250" key="1"/>
<evidence type="ECO:0000255" key="2"/>
<evidence type="ECO:0000305" key="3"/>
<reference key="1">
    <citation type="journal article" date="2002" name="Nature">
        <title>Sequence and analysis of chromosome 2 of Dictyostelium discoideum.</title>
        <authorList>
            <person name="Gloeckner G."/>
            <person name="Eichinger L."/>
            <person name="Szafranski K."/>
            <person name="Pachebat J.A."/>
            <person name="Bankier A.T."/>
            <person name="Dear P.H."/>
            <person name="Lehmann R."/>
            <person name="Baumgart C."/>
            <person name="Parra G."/>
            <person name="Abril J.F."/>
            <person name="Guigo R."/>
            <person name="Kumpf K."/>
            <person name="Tunggal B."/>
            <person name="Cox E.C."/>
            <person name="Quail M.A."/>
            <person name="Platzer M."/>
            <person name="Rosenthal A."/>
            <person name="Noegel A.A."/>
        </authorList>
    </citation>
    <scope>NUCLEOTIDE SEQUENCE [LARGE SCALE GENOMIC DNA]</scope>
    <source>
        <strain>AX4</strain>
    </source>
</reference>
<reference key="2">
    <citation type="journal article" date="2005" name="Nature">
        <title>The genome of the social amoeba Dictyostelium discoideum.</title>
        <authorList>
            <person name="Eichinger L."/>
            <person name="Pachebat J.A."/>
            <person name="Gloeckner G."/>
            <person name="Rajandream M.A."/>
            <person name="Sucgang R."/>
            <person name="Berriman M."/>
            <person name="Song J."/>
            <person name="Olsen R."/>
            <person name="Szafranski K."/>
            <person name="Xu Q."/>
            <person name="Tunggal B."/>
            <person name="Kummerfeld S."/>
            <person name="Madera M."/>
            <person name="Konfortov B.A."/>
            <person name="Rivero F."/>
            <person name="Bankier A.T."/>
            <person name="Lehmann R."/>
            <person name="Hamlin N."/>
            <person name="Davies R."/>
            <person name="Gaudet P."/>
            <person name="Fey P."/>
            <person name="Pilcher K."/>
            <person name="Chen G."/>
            <person name="Saunders D."/>
            <person name="Sodergren E.J."/>
            <person name="Davis P."/>
            <person name="Kerhornou A."/>
            <person name="Nie X."/>
            <person name="Hall N."/>
            <person name="Anjard C."/>
            <person name="Hemphill L."/>
            <person name="Bason N."/>
            <person name="Farbrother P."/>
            <person name="Desany B."/>
            <person name="Just E."/>
            <person name="Morio T."/>
            <person name="Rost R."/>
            <person name="Churcher C.M."/>
            <person name="Cooper J."/>
            <person name="Haydock S."/>
            <person name="van Driessche N."/>
            <person name="Cronin A."/>
            <person name="Goodhead I."/>
            <person name="Muzny D.M."/>
            <person name="Mourier T."/>
            <person name="Pain A."/>
            <person name="Lu M."/>
            <person name="Harper D."/>
            <person name="Lindsay R."/>
            <person name="Hauser H."/>
            <person name="James K.D."/>
            <person name="Quiles M."/>
            <person name="Madan Babu M."/>
            <person name="Saito T."/>
            <person name="Buchrieser C."/>
            <person name="Wardroper A."/>
            <person name="Felder M."/>
            <person name="Thangavelu M."/>
            <person name="Johnson D."/>
            <person name="Knights A."/>
            <person name="Loulseged H."/>
            <person name="Mungall K.L."/>
            <person name="Oliver K."/>
            <person name="Price C."/>
            <person name="Quail M.A."/>
            <person name="Urushihara H."/>
            <person name="Hernandez J."/>
            <person name="Rabbinowitsch E."/>
            <person name="Steffen D."/>
            <person name="Sanders M."/>
            <person name="Ma J."/>
            <person name="Kohara Y."/>
            <person name="Sharp S."/>
            <person name="Simmonds M.N."/>
            <person name="Spiegler S."/>
            <person name="Tivey A."/>
            <person name="Sugano S."/>
            <person name="White B."/>
            <person name="Walker D."/>
            <person name="Woodward J.R."/>
            <person name="Winckler T."/>
            <person name="Tanaka Y."/>
            <person name="Shaulsky G."/>
            <person name="Schleicher M."/>
            <person name="Weinstock G.M."/>
            <person name="Rosenthal A."/>
            <person name="Cox E.C."/>
            <person name="Chisholm R.L."/>
            <person name="Gibbs R.A."/>
            <person name="Loomis W.F."/>
            <person name="Platzer M."/>
            <person name="Kay R.R."/>
            <person name="Williams J.G."/>
            <person name="Dear P.H."/>
            <person name="Noegel A.A."/>
            <person name="Barrell B.G."/>
            <person name="Kuspa A."/>
        </authorList>
    </citation>
    <scope>NUCLEOTIDE SEQUENCE [LARGE SCALE GENOMIC DNA]</scope>
    <source>
        <strain>AX4</strain>
    </source>
</reference>